<evidence type="ECO:0000255" key="1"/>
<evidence type="ECO:0000305" key="2"/>
<comment type="subcellular location">
    <subcellularLocation>
        <location evidence="2">Membrane</location>
        <topology evidence="2">Multi-pass membrane protein</topology>
    </subcellularLocation>
</comment>
<comment type="similarity">
    <text evidence="2">Belongs to the nematode receptor-like protein srd family.</text>
</comment>
<organism>
    <name type="scientific">Caenorhabditis elegans</name>
    <dbReference type="NCBI Taxonomy" id="6239"/>
    <lineage>
        <taxon>Eukaryota</taxon>
        <taxon>Metazoa</taxon>
        <taxon>Ecdysozoa</taxon>
        <taxon>Nematoda</taxon>
        <taxon>Chromadorea</taxon>
        <taxon>Rhabditida</taxon>
        <taxon>Rhabditina</taxon>
        <taxon>Rhabditomorpha</taxon>
        <taxon>Rhabditoidea</taxon>
        <taxon>Rhabditidae</taxon>
        <taxon>Peloderinae</taxon>
        <taxon>Caenorhabditis</taxon>
    </lineage>
</organism>
<reference key="1">
    <citation type="journal article" date="1998" name="Science">
        <title>Genome sequence of the nematode C. elegans: a platform for investigating biology.</title>
        <authorList>
            <consortium name="The C. elegans sequencing consortium"/>
        </authorList>
    </citation>
    <scope>NUCLEOTIDE SEQUENCE [LARGE SCALE GENOMIC DNA]</scope>
    <source>
        <strain>Bristol N2</strain>
    </source>
</reference>
<accession>O17822</accession>
<accession>Q19506</accession>
<feature type="chain" id="PRO_0000104528" description="Serpentine receptor class delta-48">
    <location>
        <begin position="1"/>
        <end position="316"/>
    </location>
</feature>
<feature type="transmembrane region" description="Helical" evidence="1">
    <location>
        <begin position="8"/>
        <end position="28"/>
    </location>
</feature>
<feature type="transmembrane region" description="Helical" evidence="1">
    <location>
        <begin position="42"/>
        <end position="62"/>
    </location>
</feature>
<feature type="transmembrane region" description="Helical" evidence="1">
    <location>
        <begin position="89"/>
        <end position="109"/>
    </location>
</feature>
<feature type="transmembrane region" description="Helical" evidence="1">
    <location>
        <begin position="127"/>
        <end position="147"/>
    </location>
</feature>
<feature type="transmembrane region" description="Helical" evidence="1">
    <location>
        <begin position="185"/>
        <end position="205"/>
    </location>
</feature>
<feature type="transmembrane region" description="Helical" evidence="1">
    <location>
        <begin position="236"/>
        <end position="256"/>
    </location>
</feature>
<feature type="transmembrane region" description="Helical" evidence="1">
    <location>
        <begin position="269"/>
        <end position="289"/>
    </location>
</feature>
<gene>
    <name type="primary">srd-48</name>
    <name type="ORF">F17A2.9</name>
</gene>
<dbReference type="EMBL" id="Z68114">
    <property type="protein sequence ID" value="CAA92160.1"/>
    <property type="molecule type" value="Genomic_DNA"/>
</dbReference>
<dbReference type="PIR" id="T21044">
    <property type="entry name" value="T21044"/>
</dbReference>
<dbReference type="RefSeq" id="NP_510067.1">
    <property type="nucleotide sequence ID" value="NM_077666.1"/>
</dbReference>
<dbReference type="SMR" id="O17822"/>
<dbReference type="FunCoup" id="O17822">
    <property type="interactions" value="9"/>
</dbReference>
<dbReference type="PaxDb" id="6239-F17A2.9"/>
<dbReference type="EnsemblMetazoa" id="F17A2.9.1">
    <property type="protein sequence ID" value="F17A2.9.1"/>
    <property type="gene ID" value="WBGene00005126"/>
</dbReference>
<dbReference type="GeneID" id="184605"/>
<dbReference type="KEGG" id="cel:CELE_F17A2.9"/>
<dbReference type="UCSC" id="F17A2.9">
    <property type="organism name" value="c. elegans"/>
</dbReference>
<dbReference type="AGR" id="WB:WBGene00005126"/>
<dbReference type="CTD" id="184605"/>
<dbReference type="WormBase" id="F17A2.9">
    <property type="protein sequence ID" value="CE15862"/>
    <property type="gene ID" value="WBGene00005126"/>
    <property type="gene designation" value="srd-48"/>
</dbReference>
<dbReference type="eggNOG" id="ENOG502TDGT">
    <property type="taxonomic scope" value="Eukaryota"/>
</dbReference>
<dbReference type="GeneTree" id="ENSGT00970000195825"/>
<dbReference type="HOGENOM" id="CLU_057924_2_0_1"/>
<dbReference type="InParanoid" id="O17822"/>
<dbReference type="OrthoDB" id="5863340at2759"/>
<dbReference type="PhylomeDB" id="O17822"/>
<dbReference type="PRO" id="PR:O17822"/>
<dbReference type="Proteomes" id="UP000001940">
    <property type="component" value="Chromosome X"/>
</dbReference>
<dbReference type="GO" id="GO:0016020">
    <property type="term" value="C:membrane"/>
    <property type="evidence" value="ECO:0007669"/>
    <property type="project" value="UniProtKB-SubCell"/>
</dbReference>
<dbReference type="InterPro" id="IPR019421">
    <property type="entry name" value="7TM_GPCR_serpentine_rcpt_Srd"/>
</dbReference>
<dbReference type="InterPro" id="IPR050920">
    <property type="entry name" value="Nematode_rcpt-like_delta"/>
</dbReference>
<dbReference type="PANTHER" id="PTHR22945:SF26">
    <property type="entry name" value="SERPENTINE RECEPTOR CLASS DELTA-45-RELATED"/>
    <property type="match status" value="1"/>
</dbReference>
<dbReference type="PANTHER" id="PTHR22945">
    <property type="entry name" value="SERPENTINE RECEPTOR, CLASS D DELTA"/>
    <property type="match status" value="1"/>
</dbReference>
<dbReference type="Pfam" id="PF10317">
    <property type="entry name" value="7TM_GPCR_Srd"/>
    <property type="match status" value="1"/>
</dbReference>
<keyword id="KW-0472">Membrane</keyword>
<keyword id="KW-1185">Reference proteome</keyword>
<keyword id="KW-0812">Transmembrane</keyword>
<keyword id="KW-1133">Transmembrane helix</keyword>
<proteinExistence type="inferred from homology"/>
<sequence length="316" mass="36442">MYGEILSFFYITFFILVLPTQIFGIFVILRFSTKHLKLWKKFLLCNLICQIISVATLCLLQLRQVSNLSPMEIWCYGPIRHFSAITSYLFYVLSQISTLMTYFLVFITIYLKYEAVKNVNKQNYRKVVIILMLLLPIFITMVAQIDLMIVFFSPNEAQKKFNELNAIITDHSVIGYVISGRISSFLLTVIIFGSVFLLPPAGFFIRKKIIRCINSTSDSASVGQKFQRRSFINGLTLQSFLPLVCICPIFACYFVVSRTKTDLPFEQHILPVLVMLPTLFDPYIILYSVTPYRKQIRTWLGMTKTVPMVIVASVMI</sequence>
<protein>
    <recommendedName>
        <fullName>Serpentine receptor class delta-48</fullName>
        <shortName>Protein srd-48</shortName>
    </recommendedName>
</protein>
<name>SRD48_CAEEL</name>